<organism>
    <name type="scientific">Brucella anthropi (strain ATCC 49188 / DSM 6882 / CCUG 24695 / JCM 21032 / LMG 3331 / NBRC 15819 / NCTC 12168 / Alc 37)</name>
    <name type="common">Ochrobactrum anthropi</name>
    <dbReference type="NCBI Taxonomy" id="439375"/>
    <lineage>
        <taxon>Bacteria</taxon>
        <taxon>Pseudomonadati</taxon>
        <taxon>Pseudomonadota</taxon>
        <taxon>Alphaproteobacteria</taxon>
        <taxon>Hyphomicrobiales</taxon>
        <taxon>Brucellaceae</taxon>
        <taxon>Brucella/Ochrobactrum group</taxon>
        <taxon>Brucella</taxon>
    </lineage>
</organism>
<gene>
    <name type="ordered locus">Oant_3664</name>
</gene>
<proteinExistence type="inferred from homology"/>
<keyword id="KW-0963">Cytoplasm</keyword>
<keyword id="KW-0378">Hydrolase</keyword>
<keyword id="KW-0540">Nuclease</keyword>
<keyword id="KW-1185">Reference proteome</keyword>
<keyword id="KW-0690">Ribosome biogenesis</keyword>
<comment type="function">
    <text evidence="1">Could be a nuclease involved in processing of the 5'-end of pre-16S rRNA.</text>
</comment>
<comment type="subcellular location">
    <subcellularLocation>
        <location evidence="1">Cytoplasm</location>
    </subcellularLocation>
</comment>
<comment type="similarity">
    <text evidence="1">Belongs to the YqgF nuclease family.</text>
</comment>
<sequence length="165" mass="17714">MAVVEIEEIPALLQSGQTIAGLDLGTKTIGLAVSDLGLSFAHPRPVIKRVKFSIDAQVLLKALDADKVGVIVIGLPMNMDGTSGPRVQATRAFVRTMQPLTDLPFVFWDERLSTVAAERALIGMDVSRGKRADRIDSAAASFILQGALDRLHSIRRSASDDYDAG</sequence>
<dbReference type="EC" id="3.1.-.-" evidence="1"/>
<dbReference type="EMBL" id="CP000759">
    <property type="protein sequence ID" value="ABS16370.1"/>
    <property type="molecule type" value="Genomic_DNA"/>
</dbReference>
<dbReference type="SMR" id="A6X566"/>
<dbReference type="STRING" id="439375.Oant_3664"/>
<dbReference type="KEGG" id="oan:Oant_3664"/>
<dbReference type="PATRIC" id="fig|439375.7.peg.3827"/>
<dbReference type="eggNOG" id="COG0816">
    <property type="taxonomic scope" value="Bacteria"/>
</dbReference>
<dbReference type="HOGENOM" id="CLU_098240_1_1_5"/>
<dbReference type="PhylomeDB" id="A6X566"/>
<dbReference type="Proteomes" id="UP000002301">
    <property type="component" value="Chromosome 2"/>
</dbReference>
<dbReference type="GO" id="GO:0005829">
    <property type="term" value="C:cytosol"/>
    <property type="evidence" value="ECO:0007669"/>
    <property type="project" value="TreeGrafter"/>
</dbReference>
<dbReference type="GO" id="GO:0004518">
    <property type="term" value="F:nuclease activity"/>
    <property type="evidence" value="ECO:0007669"/>
    <property type="project" value="UniProtKB-KW"/>
</dbReference>
<dbReference type="GO" id="GO:0000967">
    <property type="term" value="P:rRNA 5'-end processing"/>
    <property type="evidence" value="ECO:0007669"/>
    <property type="project" value="UniProtKB-UniRule"/>
</dbReference>
<dbReference type="CDD" id="cd16964">
    <property type="entry name" value="YqgF"/>
    <property type="match status" value="1"/>
</dbReference>
<dbReference type="Gene3D" id="3.30.420.140">
    <property type="entry name" value="YqgF/RNase H-like domain"/>
    <property type="match status" value="1"/>
</dbReference>
<dbReference type="HAMAP" id="MF_00651">
    <property type="entry name" value="Nuclease_YqgF"/>
    <property type="match status" value="1"/>
</dbReference>
<dbReference type="InterPro" id="IPR012337">
    <property type="entry name" value="RNaseH-like_sf"/>
</dbReference>
<dbReference type="InterPro" id="IPR005227">
    <property type="entry name" value="YqgF"/>
</dbReference>
<dbReference type="InterPro" id="IPR006641">
    <property type="entry name" value="YqgF/RNaseH-like_dom"/>
</dbReference>
<dbReference type="InterPro" id="IPR037027">
    <property type="entry name" value="YqgF/RNaseH-like_dom_sf"/>
</dbReference>
<dbReference type="NCBIfam" id="TIGR00250">
    <property type="entry name" value="RNAse_H_YqgF"/>
    <property type="match status" value="1"/>
</dbReference>
<dbReference type="PANTHER" id="PTHR33317">
    <property type="entry name" value="POLYNUCLEOTIDYL TRANSFERASE, RIBONUCLEASE H-LIKE SUPERFAMILY PROTEIN"/>
    <property type="match status" value="1"/>
</dbReference>
<dbReference type="PANTHER" id="PTHR33317:SF4">
    <property type="entry name" value="POLYNUCLEOTIDYL TRANSFERASE, RIBONUCLEASE H-LIKE SUPERFAMILY PROTEIN"/>
    <property type="match status" value="1"/>
</dbReference>
<dbReference type="Pfam" id="PF03652">
    <property type="entry name" value="RuvX"/>
    <property type="match status" value="1"/>
</dbReference>
<dbReference type="SMART" id="SM00732">
    <property type="entry name" value="YqgFc"/>
    <property type="match status" value="1"/>
</dbReference>
<dbReference type="SUPFAM" id="SSF53098">
    <property type="entry name" value="Ribonuclease H-like"/>
    <property type="match status" value="1"/>
</dbReference>
<accession>A6X566</accession>
<evidence type="ECO:0000255" key="1">
    <source>
        <dbReference type="HAMAP-Rule" id="MF_00651"/>
    </source>
</evidence>
<name>YQGF_BRUA4</name>
<feature type="chain" id="PRO_1000061545" description="Putative pre-16S rRNA nuclease">
    <location>
        <begin position="1"/>
        <end position="165"/>
    </location>
</feature>
<protein>
    <recommendedName>
        <fullName evidence="1">Putative pre-16S rRNA nuclease</fullName>
        <ecNumber evidence="1">3.1.-.-</ecNumber>
    </recommendedName>
</protein>
<reference key="1">
    <citation type="journal article" date="2011" name="J. Bacteriol.">
        <title>Genome of Ochrobactrum anthropi ATCC 49188 T, a versatile opportunistic pathogen and symbiont of several eukaryotic hosts.</title>
        <authorList>
            <person name="Chain P.S."/>
            <person name="Lang D.M."/>
            <person name="Comerci D.J."/>
            <person name="Malfatti S.A."/>
            <person name="Vergez L.M."/>
            <person name="Shin M."/>
            <person name="Ugalde R.A."/>
            <person name="Garcia E."/>
            <person name="Tolmasky M.E."/>
        </authorList>
    </citation>
    <scope>NUCLEOTIDE SEQUENCE [LARGE SCALE GENOMIC DNA]</scope>
    <source>
        <strain>ATCC 49188 / DSM 6882 / CCUG 24695 / JCM 21032 / LMG 3331 / NBRC 15819 / NCTC 12168 / Alc 37</strain>
    </source>
</reference>